<feature type="chain" id="PRO_0000224986" description="Small ribosomal subunit protein bS20">
    <location>
        <begin position="1"/>
        <end position="87"/>
    </location>
</feature>
<feature type="region of interest" description="Disordered" evidence="2">
    <location>
        <begin position="1"/>
        <end position="26"/>
    </location>
</feature>
<dbReference type="EMBL" id="AE017220">
    <property type="protein sequence ID" value="AAX63943.1"/>
    <property type="molecule type" value="Genomic_DNA"/>
</dbReference>
<dbReference type="RefSeq" id="WP_001518655.1">
    <property type="nucleotide sequence ID" value="NC_006905.1"/>
</dbReference>
<dbReference type="SMR" id="Q57TL8"/>
<dbReference type="GeneID" id="93310349"/>
<dbReference type="KEGG" id="sec:SCH_0037"/>
<dbReference type="HOGENOM" id="CLU_160655_4_0_6"/>
<dbReference type="Proteomes" id="UP000000538">
    <property type="component" value="Chromosome"/>
</dbReference>
<dbReference type="GO" id="GO:0005829">
    <property type="term" value="C:cytosol"/>
    <property type="evidence" value="ECO:0007669"/>
    <property type="project" value="TreeGrafter"/>
</dbReference>
<dbReference type="GO" id="GO:0015935">
    <property type="term" value="C:small ribosomal subunit"/>
    <property type="evidence" value="ECO:0007669"/>
    <property type="project" value="TreeGrafter"/>
</dbReference>
<dbReference type="GO" id="GO:0070181">
    <property type="term" value="F:small ribosomal subunit rRNA binding"/>
    <property type="evidence" value="ECO:0007669"/>
    <property type="project" value="TreeGrafter"/>
</dbReference>
<dbReference type="GO" id="GO:0003735">
    <property type="term" value="F:structural constituent of ribosome"/>
    <property type="evidence" value="ECO:0007669"/>
    <property type="project" value="InterPro"/>
</dbReference>
<dbReference type="GO" id="GO:0006412">
    <property type="term" value="P:translation"/>
    <property type="evidence" value="ECO:0007669"/>
    <property type="project" value="UniProtKB-UniRule"/>
</dbReference>
<dbReference type="FunFam" id="1.20.58.110:FF:000001">
    <property type="entry name" value="30S ribosomal protein S20"/>
    <property type="match status" value="1"/>
</dbReference>
<dbReference type="Gene3D" id="1.20.58.110">
    <property type="entry name" value="Ribosomal protein S20"/>
    <property type="match status" value="1"/>
</dbReference>
<dbReference type="HAMAP" id="MF_00500">
    <property type="entry name" value="Ribosomal_bS20"/>
    <property type="match status" value="1"/>
</dbReference>
<dbReference type="InterPro" id="IPR002583">
    <property type="entry name" value="Ribosomal_bS20"/>
</dbReference>
<dbReference type="InterPro" id="IPR036510">
    <property type="entry name" value="Ribosomal_bS20_sf"/>
</dbReference>
<dbReference type="NCBIfam" id="TIGR00029">
    <property type="entry name" value="S20"/>
    <property type="match status" value="1"/>
</dbReference>
<dbReference type="PANTHER" id="PTHR33398">
    <property type="entry name" value="30S RIBOSOMAL PROTEIN S20"/>
    <property type="match status" value="1"/>
</dbReference>
<dbReference type="PANTHER" id="PTHR33398:SF1">
    <property type="entry name" value="SMALL RIBOSOMAL SUBUNIT PROTEIN BS20C"/>
    <property type="match status" value="1"/>
</dbReference>
<dbReference type="Pfam" id="PF01649">
    <property type="entry name" value="Ribosomal_S20p"/>
    <property type="match status" value="1"/>
</dbReference>
<dbReference type="SUPFAM" id="SSF46992">
    <property type="entry name" value="Ribosomal protein S20"/>
    <property type="match status" value="1"/>
</dbReference>
<keyword id="KW-0687">Ribonucleoprotein</keyword>
<keyword id="KW-0689">Ribosomal protein</keyword>
<keyword id="KW-0694">RNA-binding</keyword>
<keyword id="KW-0699">rRNA-binding</keyword>
<name>RS20_SALCH</name>
<reference key="1">
    <citation type="journal article" date="2005" name="Nucleic Acids Res.">
        <title>The genome sequence of Salmonella enterica serovar Choleraesuis, a highly invasive and resistant zoonotic pathogen.</title>
        <authorList>
            <person name="Chiu C.-H."/>
            <person name="Tang P."/>
            <person name="Chu C."/>
            <person name="Hu S."/>
            <person name="Bao Q."/>
            <person name="Yu J."/>
            <person name="Chou Y.-Y."/>
            <person name="Wang H.-S."/>
            <person name="Lee Y.-S."/>
        </authorList>
    </citation>
    <scope>NUCLEOTIDE SEQUENCE [LARGE SCALE GENOMIC DNA]</scope>
    <source>
        <strain>SC-B67</strain>
    </source>
</reference>
<organism>
    <name type="scientific">Salmonella choleraesuis (strain SC-B67)</name>
    <dbReference type="NCBI Taxonomy" id="321314"/>
    <lineage>
        <taxon>Bacteria</taxon>
        <taxon>Pseudomonadati</taxon>
        <taxon>Pseudomonadota</taxon>
        <taxon>Gammaproteobacteria</taxon>
        <taxon>Enterobacterales</taxon>
        <taxon>Enterobacteriaceae</taxon>
        <taxon>Salmonella</taxon>
    </lineage>
</organism>
<sequence>MANIKSAKKRAVQSEKARKHNASRRSMMRTFIKKVYAAIEAGDKAAALKAFNEMQPIVDRQAAKGLIHKNKAARHKANLTAQINKLA</sequence>
<evidence type="ECO:0000255" key="1">
    <source>
        <dbReference type="HAMAP-Rule" id="MF_00500"/>
    </source>
</evidence>
<evidence type="ECO:0000256" key="2">
    <source>
        <dbReference type="SAM" id="MobiDB-lite"/>
    </source>
</evidence>
<evidence type="ECO:0000305" key="3"/>
<proteinExistence type="inferred from homology"/>
<gene>
    <name evidence="1" type="primary">rpsT</name>
    <name type="ordered locus">SCH_0037</name>
</gene>
<protein>
    <recommendedName>
        <fullName evidence="1">Small ribosomal subunit protein bS20</fullName>
    </recommendedName>
    <alternativeName>
        <fullName evidence="3">30S ribosomal protein S20</fullName>
    </alternativeName>
</protein>
<accession>Q57TL8</accession>
<comment type="function">
    <text evidence="1">Binds directly to 16S ribosomal RNA.</text>
</comment>
<comment type="similarity">
    <text evidence="1">Belongs to the bacterial ribosomal protein bS20 family.</text>
</comment>